<keyword id="KW-1003">Cell membrane</keyword>
<keyword id="KW-0285">Flavoprotein</keyword>
<keyword id="KW-0288">FMN</keyword>
<keyword id="KW-0472">Membrane</keyword>
<keyword id="KW-0560">Oxidoreductase</keyword>
<keyword id="KW-0614">Plasmid</keyword>
<keyword id="KW-0665">Pyrimidine biosynthesis</keyword>
<organism>
    <name type="scientific">Corynebacterium striatum</name>
    <dbReference type="NCBI Taxonomy" id="43770"/>
    <lineage>
        <taxon>Bacteria</taxon>
        <taxon>Bacillati</taxon>
        <taxon>Actinomycetota</taxon>
        <taxon>Actinomycetes</taxon>
        <taxon>Mycobacteriales</taxon>
        <taxon>Corynebacteriaceae</taxon>
        <taxon>Corynebacterium</taxon>
    </lineage>
</organism>
<reference key="1">
    <citation type="journal article" date="2000" name="Mol. Gen. Genet.">
        <title>The 51,409-bp R-plasmid pTP10 from the multiresistant clinical isolate Corynebacterium striatum M82B is composed of DNA segments initially identified in soil bacteria and in plant, animal, and human pathogens.</title>
        <authorList>
            <person name="Tauch A."/>
            <person name="Krieft S."/>
            <person name="Kalinowski J."/>
            <person name="Puehler A."/>
        </authorList>
    </citation>
    <scope>NUCLEOTIDE SEQUENCE [GENOMIC DNA]</scope>
    <source>
        <strain>M82B</strain>
    </source>
</reference>
<feature type="chain" id="PRO_0000148434" description="Dihydroorotate dehydrogenase (quinone)">
    <location>
        <begin position="1"/>
        <end position="359"/>
    </location>
</feature>
<feature type="active site" description="Nucleophile" evidence="1">
    <location>
        <position position="179"/>
    </location>
</feature>
<feature type="binding site" evidence="1">
    <location>
        <begin position="68"/>
        <end position="72"/>
    </location>
    <ligand>
        <name>FMN</name>
        <dbReference type="ChEBI" id="CHEBI:58210"/>
    </ligand>
</feature>
<feature type="binding site" evidence="1">
    <location>
        <position position="72"/>
    </location>
    <ligand>
        <name>substrate</name>
    </ligand>
</feature>
<feature type="binding site" evidence="1">
    <location>
        <position position="92"/>
    </location>
    <ligand>
        <name>FMN</name>
        <dbReference type="ChEBI" id="CHEBI:58210"/>
    </ligand>
</feature>
<feature type="binding site" evidence="1">
    <location>
        <begin position="117"/>
        <end position="121"/>
    </location>
    <ligand>
        <name>substrate</name>
    </ligand>
</feature>
<feature type="binding site" evidence="1">
    <location>
        <position position="145"/>
    </location>
    <ligand>
        <name>FMN</name>
        <dbReference type="ChEBI" id="CHEBI:58210"/>
    </ligand>
</feature>
<feature type="binding site" evidence="1">
    <location>
        <position position="176"/>
    </location>
    <ligand>
        <name>FMN</name>
        <dbReference type="ChEBI" id="CHEBI:58210"/>
    </ligand>
</feature>
<feature type="binding site" evidence="1">
    <location>
        <position position="176"/>
    </location>
    <ligand>
        <name>substrate</name>
    </ligand>
</feature>
<feature type="binding site" evidence="1">
    <location>
        <position position="181"/>
    </location>
    <ligand>
        <name>substrate</name>
    </ligand>
</feature>
<feature type="binding site" evidence="1">
    <location>
        <position position="212"/>
    </location>
    <ligand>
        <name>FMN</name>
        <dbReference type="ChEBI" id="CHEBI:58210"/>
    </ligand>
</feature>
<feature type="binding site" evidence="1">
    <location>
        <position position="240"/>
    </location>
    <ligand>
        <name>FMN</name>
        <dbReference type="ChEBI" id="CHEBI:58210"/>
    </ligand>
</feature>
<feature type="binding site" evidence="1">
    <location>
        <begin position="241"/>
        <end position="242"/>
    </location>
    <ligand>
        <name>substrate</name>
    </ligand>
</feature>
<feature type="binding site" evidence="1">
    <location>
        <position position="266"/>
    </location>
    <ligand>
        <name>FMN</name>
        <dbReference type="ChEBI" id="CHEBI:58210"/>
    </ligand>
</feature>
<feature type="binding site" evidence="1">
    <location>
        <position position="295"/>
    </location>
    <ligand>
        <name>FMN</name>
        <dbReference type="ChEBI" id="CHEBI:58210"/>
    </ligand>
</feature>
<feature type="binding site" evidence="1">
    <location>
        <begin position="316"/>
        <end position="317"/>
    </location>
    <ligand>
        <name>FMN</name>
        <dbReference type="ChEBI" id="CHEBI:58210"/>
    </ligand>
</feature>
<comment type="function">
    <text evidence="1">Catalyzes the conversion of dihydroorotate to orotate with quinone as electron acceptor.</text>
</comment>
<comment type="catalytic activity">
    <reaction evidence="1">
        <text>(S)-dihydroorotate + a quinone = orotate + a quinol</text>
        <dbReference type="Rhea" id="RHEA:30187"/>
        <dbReference type="ChEBI" id="CHEBI:24646"/>
        <dbReference type="ChEBI" id="CHEBI:30839"/>
        <dbReference type="ChEBI" id="CHEBI:30864"/>
        <dbReference type="ChEBI" id="CHEBI:132124"/>
        <dbReference type="EC" id="1.3.5.2"/>
    </reaction>
</comment>
<comment type="cofactor">
    <cofactor evidence="1">
        <name>FMN</name>
        <dbReference type="ChEBI" id="CHEBI:58210"/>
    </cofactor>
    <text evidence="1">Binds 1 FMN per subunit.</text>
</comment>
<comment type="pathway">
    <text evidence="1">Pyrimidine metabolism; UMP biosynthesis via de novo pathway; orotate from (S)-dihydroorotate (quinone route): step 1/1.</text>
</comment>
<comment type="subunit">
    <text evidence="1">Monomer.</text>
</comment>
<comment type="subcellular location">
    <subcellularLocation>
        <location evidence="1">Cell membrane</location>
        <topology evidence="1">Peripheral membrane protein</topology>
    </subcellularLocation>
</comment>
<comment type="similarity">
    <text evidence="1">Belongs to the dihydroorotate dehydrogenase family. Type 2 subfamily.</text>
</comment>
<proteinExistence type="inferred from homology"/>
<name>PYRD_CORST</name>
<dbReference type="EC" id="1.3.5.2" evidence="1"/>
<dbReference type="EMBL" id="AF024666">
    <property type="protein sequence ID" value="AAG03363.1"/>
    <property type="molecule type" value="Genomic_DNA"/>
</dbReference>
<dbReference type="RefSeq" id="NP_862229.1">
    <property type="nucleotide sequence ID" value="NC_004939.1"/>
</dbReference>
<dbReference type="RefSeq" id="WP_005390938.1">
    <property type="nucleotide sequence ID" value="NZ_VCPB01000029.1"/>
</dbReference>
<dbReference type="SMR" id="Q9FB59"/>
<dbReference type="UniPathway" id="UPA00070">
    <property type="reaction ID" value="UER00946"/>
</dbReference>
<dbReference type="GO" id="GO:0005737">
    <property type="term" value="C:cytoplasm"/>
    <property type="evidence" value="ECO:0007669"/>
    <property type="project" value="InterPro"/>
</dbReference>
<dbReference type="GO" id="GO:0005886">
    <property type="term" value="C:plasma membrane"/>
    <property type="evidence" value="ECO:0007669"/>
    <property type="project" value="UniProtKB-SubCell"/>
</dbReference>
<dbReference type="GO" id="GO:0106430">
    <property type="term" value="F:dihydroorotate dehydrogenase (quinone) activity"/>
    <property type="evidence" value="ECO:0007669"/>
    <property type="project" value="UniProtKB-EC"/>
</dbReference>
<dbReference type="GO" id="GO:0006207">
    <property type="term" value="P:'de novo' pyrimidine nucleobase biosynthetic process"/>
    <property type="evidence" value="ECO:0007669"/>
    <property type="project" value="InterPro"/>
</dbReference>
<dbReference type="GO" id="GO:0044205">
    <property type="term" value="P:'de novo' UMP biosynthetic process"/>
    <property type="evidence" value="ECO:0007669"/>
    <property type="project" value="UniProtKB-UniRule"/>
</dbReference>
<dbReference type="CDD" id="cd04738">
    <property type="entry name" value="DHOD_2_like"/>
    <property type="match status" value="1"/>
</dbReference>
<dbReference type="Gene3D" id="3.20.20.70">
    <property type="entry name" value="Aldolase class I"/>
    <property type="match status" value="1"/>
</dbReference>
<dbReference type="HAMAP" id="MF_00225">
    <property type="entry name" value="DHO_dh_type2"/>
    <property type="match status" value="1"/>
</dbReference>
<dbReference type="InterPro" id="IPR013785">
    <property type="entry name" value="Aldolase_TIM"/>
</dbReference>
<dbReference type="InterPro" id="IPR050074">
    <property type="entry name" value="DHO_dehydrogenase"/>
</dbReference>
<dbReference type="InterPro" id="IPR005719">
    <property type="entry name" value="Dihydroorotate_DH_2"/>
</dbReference>
<dbReference type="InterPro" id="IPR005720">
    <property type="entry name" value="Dihydroorotate_DH_cat"/>
</dbReference>
<dbReference type="InterPro" id="IPR001295">
    <property type="entry name" value="Dihydroorotate_DH_CS"/>
</dbReference>
<dbReference type="NCBIfam" id="NF003645">
    <property type="entry name" value="PRK05286.1-2"/>
    <property type="match status" value="1"/>
</dbReference>
<dbReference type="NCBIfam" id="NF003648">
    <property type="entry name" value="PRK05286.2-1"/>
    <property type="match status" value="1"/>
</dbReference>
<dbReference type="NCBIfam" id="NF003652">
    <property type="entry name" value="PRK05286.2-5"/>
    <property type="match status" value="1"/>
</dbReference>
<dbReference type="NCBIfam" id="TIGR01036">
    <property type="entry name" value="pyrD_sub2"/>
    <property type="match status" value="1"/>
</dbReference>
<dbReference type="PANTHER" id="PTHR48109:SF4">
    <property type="entry name" value="DIHYDROOROTATE DEHYDROGENASE (QUINONE), MITOCHONDRIAL"/>
    <property type="match status" value="1"/>
</dbReference>
<dbReference type="PANTHER" id="PTHR48109">
    <property type="entry name" value="DIHYDROOROTATE DEHYDROGENASE (QUINONE), MITOCHONDRIAL-RELATED"/>
    <property type="match status" value="1"/>
</dbReference>
<dbReference type="Pfam" id="PF01180">
    <property type="entry name" value="DHO_dh"/>
    <property type="match status" value="1"/>
</dbReference>
<dbReference type="SUPFAM" id="SSF51395">
    <property type="entry name" value="FMN-linked oxidoreductases"/>
    <property type="match status" value="1"/>
</dbReference>
<dbReference type="PROSITE" id="PS00911">
    <property type="entry name" value="DHODEHASE_1"/>
    <property type="match status" value="1"/>
</dbReference>
<dbReference type="PROSITE" id="PS00912">
    <property type="entry name" value="DHODEHASE_2"/>
    <property type="match status" value="1"/>
</dbReference>
<protein>
    <recommendedName>
        <fullName evidence="1">Dihydroorotate dehydrogenase (quinone)</fullName>
        <ecNumber evidence="1">1.3.5.2</ecNumber>
    </recommendedName>
    <alternativeName>
        <fullName evidence="1">DHOdehase</fullName>
        <shortName evidence="1">DHOD</shortName>
        <shortName evidence="1">DHODase</shortName>
    </alternativeName>
    <alternativeName>
        <fullName evidence="1">Dihydroorotate oxidase</fullName>
    </alternativeName>
</protein>
<evidence type="ECO:0000255" key="1">
    <source>
        <dbReference type="HAMAP-Rule" id="MF_00225"/>
    </source>
</evidence>
<gene>
    <name evidence="1" type="primary">pyrD</name>
</gene>
<sequence length="359" mass="38427">MTLYDRALKLMFLLPPERIHGIISGALQTLHLATPVNRVMEKAVRVHDPVLRQTVFGVDFPAPLGLAAGFDKNAEAIDSWGAIGFGYAEMGTVTPKSQPGNPTPRLFRLPEDKAILNRMGFNNKGALVVADNLRARRSRDVVGINIGKNKTSEDAVADYRATSTLLGQLADYLVVNVSSPNTPGLRDLQAVEELRPILEVVKKSTTTPVLVKIAPDLSDEDIDAVADLAVELELAGIVATNTTISRSGLKTPASKVEKMGAGGISGAPLENRSLEVLKRLHERVGDKLVLVSVGGISTPEQAWERITAGASLLQGYTPFIYGGLGWIRGIHRGIAAQIKAHGLDSIEQAVGSGLEWKAL</sequence>
<geneLocation type="plasmid">
    <name>pTP10</name>
</geneLocation>
<accession>Q9FB59</accession>